<protein>
    <recommendedName>
        <fullName>V(D)J recombination-activating protein 1</fullName>
        <shortName>RAG-1</shortName>
    </recommendedName>
    <domain>
        <recommendedName>
            <fullName>Endonuclease RAG1</fullName>
            <ecNumber>3.1.-.-</ecNumber>
        </recommendedName>
    </domain>
    <domain>
        <recommendedName>
            <fullName>E3 ubiquitin-protein ligase RAG1</fullName>
            <ecNumber>2.3.2.27</ecNumber>
        </recommendedName>
        <alternativeName>
            <fullName evidence="5">RING-type E3 ubiquitin transferase RAG1</fullName>
        </alternativeName>
    </domain>
</protein>
<dbReference type="EC" id="3.1.-.-"/>
<dbReference type="EC" id="2.3.2.27"/>
<dbReference type="EMBL" id="U15663">
    <property type="protein sequence ID" value="AAA80281.1"/>
    <property type="molecule type" value="Genomic_DNA"/>
</dbReference>
<dbReference type="PIR" id="I51055">
    <property type="entry name" value="I51055"/>
</dbReference>
<dbReference type="RefSeq" id="NP_001118209.1">
    <property type="nucleotide sequence ID" value="NM_001124737.1"/>
</dbReference>
<dbReference type="SMR" id="Q91187"/>
<dbReference type="GeneID" id="100136833"/>
<dbReference type="KEGG" id="omy:100136833"/>
<dbReference type="CTD" id="5896"/>
<dbReference type="OrthoDB" id="6270329at2759"/>
<dbReference type="Proteomes" id="UP000694395">
    <property type="component" value="Unplaced"/>
</dbReference>
<dbReference type="GO" id="GO:0097519">
    <property type="term" value="C:DNA recombinase complex"/>
    <property type="evidence" value="ECO:0007669"/>
    <property type="project" value="TreeGrafter"/>
</dbReference>
<dbReference type="GO" id="GO:1905347">
    <property type="term" value="C:endodeoxyribonuclease complex"/>
    <property type="evidence" value="ECO:0007669"/>
    <property type="project" value="TreeGrafter"/>
</dbReference>
<dbReference type="GO" id="GO:0005634">
    <property type="term" value="C:nucleus"/>
    <property type="evidence" value="ECO:0000250"/>
    <property type="project" value="UniProtKB"/>
</dbReference>
<dbReference type="GO" id="GO:1990238">
    <property type="term" value="F:double-stranded DNA endonuclease activity"/>
    <property type="evidence" value="ECO:0007669"/>
    <property type="project" value="TreeGrafter"/>
</dbReference>
<dbReference type="GO" id="GO:0004519">
    <property type="term" value="F:endonuclease activity"/>
    <property type="evidence" value="ECO:0000250"/>
    <property type="project" value="UniProtKB"/>
</dbReference>
<dbReference type="GO" id="GO:0042393">
    <property type="term" value="F:histone binding"/>
    <property type="evidence" value="ECO:0000250"/>
    <property type="project" value="UniProtKB"/>
</dbReference>
<dbReference type="GO" id="GO:0046872">
    <property type="term" value="F:metal ion binding"/>
    <property type="evidence" value="ECO:0000250"/>
    <property type="project" value="UniProtKB"/>
</dbReference>
<dbReference type="GO" id="GO:0042803">
    <property type="term" value="F:protein homodimerization activity"/>
    <property type="evidence" value="ECO:0000250"/>
    <property type="project" value="UniProtKB"/>
</dbReference>
<dbReference type="GO" id="GO:0043565">
    <property type="term" value="F:sequence-specific DNA binding"/>
    <property type="evidence" value="ECO:0000250"/>
    <property type="project" value="UniProtKB"/>
</dbReference>
<dbReference type="GO" id="GO:0061630">
    <property type="term" value="F:ubiquitin protein ligase activity"/>
    <property type="evidence" value="ECO:0007669"/>
    <property type="project" value="InterPro"/>
</dbReference>
<dbReference type="GO" id="GO:0004842">
    <property type="term" value="F:ubiquitin-protein transferase activity"/>
    <property type="evidence" value="ECO:0000250"/>
    <property type="project" value="UniProtKB"/>
</dbReference>
<dbReference type="GO" id="GO:0008270">
    <property type="term" value="F:zinc ion binding"/>
    <property type="evidence" value="ECO:0000250"/>
    <property type="project" value="UniProtKB"/>
</dbReference>
<dbReference type="GO" id="GO:0002250">
    <property type="term" value="P:adaptive immune response"/>
    <property type="evidence" value="ECO:0007669"/>
    <property type="project" value="TreeGrafter"/>
</dbReference>
<dbReference type="GO" id="GO:0030183">
    <property type="term" value="P:B cell differentiation"/>
    <property type="evidence" value="ECO:0000250"/>
    <property type="project" value="UniProtKB"/>
</dbReference>
<dbReference type="GO" id="GO:0006325">
    <property type="term" value="P:chromatin organization"/>
    <property type="evidence" value="ECO:0007669"/>
    <property type="project" value="UniProtKB-KW"/>
</dbReference>
<dbReference type="GO" id="GO:0033077">
    <property type="term" value="P:T cell differentiation in thymus"/>
    <property type="evidence" value="ECO:0000250"/>
    <property type="project" value="UniProtKB"/>
</dbReference>
<dbReference type="GO" id="GO:0033151">
    <property type="term" value="P:V(D)J recombination"/>
    <property type="evidence" value="ECO:0000250"/>
    <property type="project" value="UniProtKB"/>
</dbReference>
<dbReference type="CDD" id="cd16530">
    <property type="entry name" value="RING-HC_RAG1"/>
    <property type="match status" value="1"/>
</dbReference>
<dbReference type="FunFam" id="3.30.40.10:FF:000943">
    <property type="entry name" value="V(D)J recombination-activating protein 1 isoform X2"/>
    <property type="match status" value="1"/>
</dbReference>
<dbReference type="Gene3D" id="6.10.140.510">
    <property type="match status" value="1"/>
</dbReference>
<dbReference type="Gene3D" id="3.30.40.10">
    <property type="entry name" value="Zinc/RING finger domain, C3HC4 (zinc finger)"/>
    <property type="match status" value="1"/>
</dbReference>
<dbReference type="InterPro" id="IPR024627">
    <property type="entry name" value="RAG1"/>
</dbReference>
<dbReference type="InterPro" id="IPR035714">
    <property type="entry name" value="RAG1_imp-bd"/>
</dbReference>
<dbReference type="InterPro" id="IPR019485">
    <property type="entry name" value="RAG1_Znf"/>
</dbReference>
<dbReference type="InterPro" id="IPR023336">
    <property type="entry name" value="RAG_nonamer-bd_dom"/>
</dbReference>
<dbReference type="InterPro" id="IPR018957">
    <property type="entry name" value="Znf_C3HC4_RING-type"/>
</dbReference>
<dbReference type="InterPro" id="IPR001841">
    <property type="entry name" value="Znf_RING"/>
</dbReference>
<dbReference type="InterPro" id="IPR013083">
    <property type="entry name" value="Znf_RING/FYVE/PHD"/>
</dbReference>
<dbReference type="InterPro" id="IPR017907">
    <property type="entry name" value="Znf_RING_CS"/>
</dbReference>
<dbReference type="PANTHER" id="PTHR11539:SF0">
    <property type="entry name" value="V(D)J RECOMBINATION-ACTIVATING PROTEIN 1"/>
    <property type="match status" value="1"/>
</dbReference>
<dbReference type="PANTHER" id="PTHR11539">
    <property type="entry name" value="VDJ RECOMBINATION ACTIVATING PROTEIN 1 RAG1"/>
    <property type="match status" value="1"/>
</dbReference>
<dbReference type="Pfam" id="PF12940">
    <property type="entry name" value="RAG1"/>
    <property type="match status" value="1"/>
</dbReference>
<dbReference type="Pfam" id="PF12560">
    <property type="entry name" value="RAG1_imp_bd"/>
    <property type="match status" value="1"/>
</dbReference>
<dbReference type="Pfam" id="PF00097">
    <property type="entry name" value="zf-C3HC4"/>
    <property type="match status" value="1"/>
</dbReference>
<dbReference type="SMART" id="SM00184">
    <property type="entry name" value="RING"/>
    <property type="match status" value="1"/>
</dbReference>
<dbReference type="SUPFAM" id="SSF57850">
    <property type="entry name" value="RING/U-box"/>
    <property type="match status" value="1"/>
</dbReference>
<dbReference type="PROSITE" id="PS51487">
    <property type="entry name" value="NBD"/>
    <property type="match status" value="1"/>
</dbReference>
<dbReference type="PROSITE" id="PS51765">
    <property type="entry name" value="ZF_RAG1"/>
    <property type="match status" value="1"/>
</dbReference>
<dbReference type="PROSITE" id="PS00518">
    <property type="entry name" value="ZF_RING_1"/>
    <property type="match status" value="1"/>
</dbReference>
<dbReference type="PROSITE" id="PS50089">
    <property type="entry name" value="ZF_RING_2"/>
    <property type="match status" value="1"/>
</dbReference>
<gene>
    <name type="primary">rag1</name>
</gene>
<feature type="chain" id="PRO_0000056011" description="V(D)J recombination-activating protein 1">
    <location>
        <begin position="1"/>
        <end position="1073"/>
    </location>
</feature>
<feature type="zinc finger region" description="RING-type" evidence="2">
    <location>
        <begin position="310"/>
        <end position="349"/>
    </location>
</feature>
<feature type="zinc finger region" description="RAG1-type" evidence="4">
    <location>
        <begin position="371"/>
        <end position="400"/>
    </location>
</feature>
<feature type="DNA-binding region" description="NBD" evidence="3">
    <location>
        <begin position="421"/>
        <end position="488"/>
    </location>
</feature>
<feature type="binding site" evidence="1">
    <location>
        <position position="286"/>
    </location>
    <ligand>
        <name>Zn(2+)</name>
        <dbReference type="ChEBI" id="CHEBI:29105"/>
        <label>1</label>
    </ligand>
</feature>
<feature type="binding site" evidence="1">
    <location>
        <position position="290"/>
    </location>
    <ligand>
        <name>Zn(2+)</name>
        <dbReference type="ChEBI" id="CHEBI:29105"/>
        <label>1</label>
    </ligand>
</feature>
<feature type="binding site" evidence="1">
    <location>
        <position position="310"/>
    </location>
    <ligand>
        <name>Zn(2+)</name>
        <dbReference type="ChEBI" id="CHEBI:29105"/>
        <label>2</label>
    </ligand>
</feature>
<feature type="binding site" evidence="1">
    <location>
        <position position="313"/>
    </location>
    <ligand>
        <name>Zn(2+)</name>
        <dbReference type="ChEBI" id="CHEBI:29105"/>
        <label>1</label>
    </ligand>
</feature>
<feature type="binding site" evidence="1">
    <location>
        <position position="313"/>
    </location>
    <ligand>
        <name>Zn(2+)</name>
        <dbReference type="ChEBI" id="CHEBI:29105"/>
        <label>2</label>
    </ligand>
</feature>
<feature type="binding site" evidence="1">
    <location>
        <position position="315"/>
    </location>
    <ligand>
        <name>Zn(2+)</name>
        <dbReference type="ChEBI" id="CHEBI:29105"/>
        <label>1</label>
    </ligand>
</feature>
<feature type="binding site" evidence="1">
    <location>
        <position position="325"/>
    </location>
    <ligand>
        <name>Zn(2+)</name>
        <dbReference type="ChEBI" id="CHEBI:29105"/>
        <label>3</label>
    </ligand>
</feature>
<feature type="binding site" evidence="1">
    <location>
        <position position="327"/>
    </location>
    <ligand>
        <name>Zn(2+)</name>
        <dbReference type="ChEBI" id="CHEBI:29105"/>
        <label>3</label>
    </ligand>
</feature>
<feature type="binding site" evidence="1">
    <location>
        <position position="330"/>
    </location>
    <ligand>
        <name>Zn(2+)</name>
        <dbReference type="ChEBI" id="CHEBI:29105"/>
        <label>2</label>
    </ligand>
</feature>
<feature type="binding site" evidence="1">
    <location>
        <position position="333"/>
    </location>
    <ligand>
        <name>Zn(2+)</name>
        <dbReference type="ChEBI" id="CHEBI:29105"/>
        <label>2</label>
    </ligand>
</feature>
<feature type="binding site" evidence="1">
    <location>
        <position position="345"/>
    </location>
    <ligand>
        <name>Zn(2+)</name>
        <dbReference type="ChEBI" id="CHEBI:29105"/>
        <label>3</label>
    </ligand>
</feature>
<feature type="binding site" evidence="1">
    <location>
        <position position="348"/>
    </location>
    <ligand>
        <name>Zn(2+)</name>
        <dbReference type="ChEBI" id="CHEBI:29105"/>
        <label>3</label>
    </ligand>
</feature>
<feature type="binding site" evidence="4">
    <location>
        <position position="375"/>
    </location>
    <ligand>
        <name>Zn(2+)</name>
        <dbReference type="ChEBI" id="CHEBI:29105"/>
        <label>4</label>
    </ligand>
</feature>
<feature type="binding site" evidence="4">
    <location>
        <position position="380"/>
    </location>
    <ligand>
        <name>Zn(2+)</name>
        <dbReference type="ChEBI" id="CHEBI:29105"/>
        <label>4</label>
    </ligand>
</feature>
<feature type="binding site" evidence="4">
    <location>
        <position position="392"/>
    </location>
    <ligand>
        <name>Zn(2+)</name>
        <dbReference type="ChEBI" id="CHEBI:29105"/>
        <label>4</label>
    </ligand>
</feature>
<feature type="binding site" evidence="4">
    <location>
        <position position="396"/>
    </location>
    <ligand>
        <name>Zn(2+)</name>
        <dbReference type="ChEBI" id="CHEBI:29105"/>
        <label>4</label>
    </ligand>
</feature>
<feature type="binding site" evidence="1">
    <location>
        <position position="633"/>
    </location>
    <ligand>
        <name>a divalent metal cation</name>
        <dbReference type="ChEBI" id="CHEBI:60240"/>
        <note>catalytic</note>
    </ligand>
</feature>
<feature type="binding site" evidence="1">
    <location>
        <position position="743"/>
    </location>
    <ligand>
        <name>a divalent metal cation</name>
        <dbReference type="ChEBI" id="CHEBI:60240"/>
        <note>catalytic</note>
    </ligand>
</feature>
<feature type="binding site" evidence="1">
    <location>
        <position position="997"/>
    </location>
    <ligand>
        <name>a divalent metal cation</name>
        <dbReference type="ChEBI" id="CHEBI:60240"/>
        <note>catalytic</note>
    </ligand>
</feature>
<feature type="site" description="Essential for DNA hairpin formation, participates in base-stacking interactions near the cleavage site" evidence="1">
    <location>
        <position position="928"/>
    </location>
</feature>
<keyword id="KW-0156">Chromatin regulator</keyword>
<keyword id="KW-0233">DNA recombination</keyword>
<keyword id="KW-0238">DNA-binding</keyword>
<keyword id="KW-0255">Endonuclease</keyword>
<keyword id="KW-0378">Hydrolase</keyword>
<keyword id="KW-0479">Metal-binding</keyword>
<keyword id="KW-0511">Multifunctional enzyme</keyword>
<keyword id="KW-0540">Nuclease</keyword>
<keyword id="KW-0539">Nucleus</keyword>
<keyword id="KW-0808">Transferase</keyword>
<keyword id="KW-0833">Ubl conjugation pathway</keyword>
<keyword id="KW-0862">Zinc</keyword>
<keyword id="KW-0863">Zinc-finger</keyword>
<proteinExistence type="inferred from homology"/>
<organism>
    <name type="scientific">Oncorhynchus mykiss</name>
    <name type="common">Rainbow trout</name>
    <name type="synonym">Salmo gairdneri</name>
    <dbReference type="NCBI Taxonomy" id="8022"/>
    <lineage>
        <taxon>Eukaryota</taxon>
        <taxon>Metazoa</taxon>
        <taxon>Chordata</taxon>
        <taxon>Craniata</taxon>
        <taxon>Vertebrata</taxon>
        <taxon>Euteleostomi</taxon>
        <taxon>Actinopterygii</taxon>
        <taxon>Neopterygii</taxon>
        <taxon>Teleostei</taxon>
        <taxon>Protacanthopterygii</taxon>
        <taxon>Salmoniformes</taxon>
        <taxon>Salmonidae</taxon>
        <taxon>Salmoninae</taxon>
        <taxon>Oncorhynchus</taxon>
    </lineage>
</organism>
<evidence type="ECO:0000250" key="1"/>
<evidence type="ECO:0000255" key="2">
    <source>
        <dbReference type="PROSITE-ProRule" id="PRU00175"/>
    </source>
</evidence>
<evidence type="ECO:0000255" key="3">
    <source>
        <dbReference type="PROSITE-ProRule" id="PRU00820"/>
    </source>
</evidence>
<evidence type="ECO:0000255" key="4">
    <source>
        <dbReference type="PROSITE-ProRule" id="PRU01101"/>
    </source>
</evidence>
<evidence type="ECO:0000305" key="5"/>
<reference key="1">
    <citation type="journal article" date="1995" name="Immunogenetics">
        <title>The recombination activation gene 1 (RAG1) of rainbow trout (Oncorhynchus mykiss): cloning, expression, and phylogenetic analysis.</title>
        <authorList>
            <person name="Hansen J.D."/>
            <person name="Kaattari S.L."/>
        </authorList>
    </citation>
    <scope>NUCLEOTIDE SEQUENCE [GENOMIC DNA]</scope>
    <source>
        <strain>Shasta</strain>
        <tissue>Testis</tissue>
    </source>
</reference>
<name>RAG1_ONCMY</name>
<sequence>MEETYAPRCSMPAELHHPYSKFSDWKFKLFRVRSMERAPLPGEMQLERGALSGVVASAPLGETVGDVVGLPGSVMKLWLGGKSKENVEGPGKRVDLKLQEMDTYMNHLRCLCRLCGGALRKAKGPEHEVQGLLDEASMSALRRVGCKATSWPEVILKVFKVDVAGDMEVVHPPFFCQRCWTLAMRGGGFCSFSRTHVPGWRPHTTLCLLCTPRNPHYRGERKRRKPTRGAQHLAKRTKWDLQDNAAIVGEKRAWRTVIDPPQGPGLRPWVRSSVQRAQWVKSITLCQKEHLSARLLSEDLPVDFLSSVTCQVCDHLLSEPVQSPCRHLFCRSCIAKYIYSLGPHCPACTLPCGPADLTAPAKGFLGVLHSLPLLCPRESCGEQVRLDSFRAHCLGHHLEEVDGDHKSAENSLDNFLPVNKGGRPRQHLLSLTRRAQKHRLRDLKTQVKVFAEKEEGGDTKSVCLTLFLLALRAGNEHRQADELEAMMQGRGFGLHPAVCLAIRVNTFLSCSQYHKMYRTVKATSGRQIFQPLHTLRTAEKELLPGYHPFEWQPALKSVSTSCHVGIIDGLSGWIASVDDSPADTVTRRFRYDVALVSALKDLEEDIMEGLRERGLEDSACTSGFSVMIKESCDGMGDVSEKHGGGPPVPEKPVRFSFTIMSVSIQAEGEDEAITIFREPKPNSEMSCKPLSLMFVDESDHETLTGVLGPVVAERNAMKHSRLILSVGGLSRSFRFHFRGTGYDEKMVREMEGLEASGSTYICTLCDSTRAEASQNMTLHSVTRSHDENLERYELWRTNPHSESAEELRDRVKGVSAKPFMETQPTLDALHCDIGNATEFYKIFQDEIGEVYHKANPSREQRRSWRAALDKQLRKKMKLKPVMRMNGNYARKLMTREAVEAVCELVCSEERQEALRELMGLYIQMKPVWRSTCPAKECPDELCRYSFNSQRFAELLSTVFKYRYDGKITNYLHKTLAHVPEIVERDGSIGAWASEGNESGNKLFRRFRKMNARQSKTFELEDVLKHHWLYTSKYLQKFMEAHKDSAKALQATIDTVGSQETQEDADMSLDVPDF</sequence>
<comment type="function">
    <text evidence="1">Catalytic component of the RAG complex, a multiprotein complex that mediates the DNA cleavage phase during V(D)J recombination. V(D)J recombination assembles a diverse repertoire of immunoglobulin and T-cell receptor genes in developing B and T lymphocytes through rearrangement of different V (variable), in some cases D (diversity), and J (joining) gene segments. In the RAG complex, RAG1 mediates the DNA-binding to the conserved recombination signal sequences (RSS) and catalyzes the DNA cleavage activities by introducing a double-strand break between the RSS and the adjacent coding segment. RAG2 is not a catalytic component but is required for all known catalytic activities. DNA cleavage occurs in 2 steps: a first nick is introduced in the top strand immediately upstream of the heptamer, generating a 3'-hydroxyl group that can attack the phosphodiester bond on the opposite strand in a direct transesterification reaction, thereby creating 4 DNA ends: 2 hairpin coding ends and 2 blunt, 5'-phosphorylated ends. In addition to its endonuclease activity, RAG1 also acts as an E3 ubiquitin-protein ligase that mediates monoubiquitination of histone H3. Histone H3 monoubiquitination is required for the joining step of V(D)J recombination (By similarity).</text>
</comment>
<comment type="catalytic activity">
    <reaction>
        <text>S-ubiquitinyl-[E2 ubiquitin-conjugating enzyme]-L-cysteine + [acceptor protein]-L-lysine = [E2 ubiquitin-conjugating enzyme]-L-cysteine + N(6)-ubiquitinyl-[acceptor protein]-L-lysine.</text>
        <dbReference type="EC" id="2.3.2.27"/>
    </reaction>
</comment>
<comment type="cofactor">
    <cofactor evidence="1">
        <name>Mg(2+)</name>
        <dbReference type="ChEBI" id="CHEBI:18420"/>
    </cofactor>
    <cofactor evidence="1">
        <name>Mn(2+)</name>
        <dbReference type="ChEBI" id="CHEBI:29035"/>
    </cofactor>
    <text evidence="1">Binds 1 divalent metal cation per subunit. Mg(2+) or Mn(2+).</text>
</comment>
<comment type="subunit">
    <text evidence="1">Homodimer. Component of the RAG complex composed of core components rag1 and rag2 (By similarity).</text>
</comment>
<comment type="subcellular location">
    <subcellularLocation>
        <location evidence="3">Nucleus</location>
    </subcellularLocation>
</comment>
<comment type="domain">
    <text evidence="1">The RING-type zinc finger mediates the E3 ubiquitin-protein ligase activity.</text>
</comment>
<comment type="domain">
    <text evidence="3">The NBD (nonamer binding) DNA-binding domain mediates the specific binding to the nonamer RSS motif by forming a tightly interwoven homodimer that binds and synapses 2 nonamer elements, with each NBD making contact with both DNA molecules. Each RSS is composed of well-conserved heptamer (consensus 5'-CACAGTG-3') and nonamer (consensus 5'-ACAAAAACC-3') sequences separated by a spacer of either 12 bp or 23 bp.</text>
</comment>
<comment type="similarity">
    <text evidence="3">Belongs to the RAG1 family.</text>
</comment>
<accession>Q91187</accession>